<dbReference type="EMBL" id="AE016879">
    <property type="protein sequence ID" value="AAP25432.1"/>
    <property type="molecule type" value="Genomic_DNA"/>
</dbReference>
<dbReference type="EMBL" id="AE017334">
    <property type="protein sequence ID" value="AAT30592.1"/>
    <property type="molecule type" value="Genomic_DNA"/>
</dbReference>
<dbReference type="EMBL" id="AE017225">
    <property type="protein sequence ID" value="AAT53703.1"/>
    <property type="molecule type" value="Genomic_DNA"/>
</dbReference>
<dbReference type="RefSeq" id="NP_843946.1">
    <property type="nucleotide sequence ID" value="NC_003997.3"/>
</dbReference>
<dbReference type="RefSeq" id="WP_000742206.1">
    <property type="nucleotide sequence ID" value="NZ_WXXJ01000014.1"/>
</dbReference>
<dbReference type="RefSeq" id="YP_027652.1">
    <property type="nucleotide sequence ID" value="NC_005945.1"/>
</dbReference>
<dbReference type="PDB" id="4NMU">
    <property type="method" value="X-ray"/>
    <property type="resolution" value="1.35 A"/>
    <property type="chains" value="A/B/C/D=30-173"/>
</dbReference>
<dbReference type="PDBsum" id="4NMU"/>
<dbReference type="SMR" id="Q81SZ9"/>
<dbReference type="STRING" id="261594.GBAA_1494"/>
<dbReference type="DNASU" id="1086435"/>
<dbReference type="GeneID" id="45021470"/>
<dbReference type="KEGG" id="ban:BA_1494"/>
<dbReference type="KEGG" id="banh:HYU01_07575"/>
<dbReference type="KEGG" id="bar:GBAA_1494"/>
<dbReference type="KEGG" id="bat:BAS1383"/>
<dbReference type="PATRIC" id="fig|198094.11.peg.1466"/>
<dbReference type="eggNOG" id="COG0526">
    <property type="taxonomic scope" value="Bacteria"/>
</dbReference>
<dbReference type="HOGENOM" id="CLU_042529_11_2_9"/>
<dbReference type="OMA" id="RYVGEPQ"/>
<dbReference type="OrthoDB" id="25753at2"/>
<dbReference type="UniPathway" id="UPA00555"/>
<dbReference type="EvolutionaryTrace" id="Q81SZ9"/>
<dbReference type="Proteomes" id="UP000000427">
    <property type="component" value="Chromosome"/>
</dbReference>
<dbReference type="Proteomes" id="UP000000594">
    <property type="component" value="Chromosome"/>
</dbReference>
<dbReference type="GO" id="GO:0005886">
    <property type="term" value="C:plasma membrane"/>
    <property type="evidence" value="ECO:0007669"/>
    <property type="project" value="UniProtKB-SubCell"/>
</dbReference>
<dbReference type="GO" id="GO:0016209">
    <property type="term" value="F:antioxidant activity"/>
    <property type="evidence" value="ECO:0007669"/>
    <property type="project" value="InterPro"/>
</dbReference>
<dbReference type="GO" id="GO:0015036">
    <property type="term" value="F:disulfide oxidoreductase activity"/>
    <property type="evidence" value="ECO:0007669"/>
    <property type="project" value="UniProtKB-UniRule"/>
</dbReference>
<dbReference type="GO" id="GO:0017004">
    <property type="term" value="P:cytochrome complex assembly"/>
    <property type="evidence" value="ECO:0007669"/>
    <property type="project" value="UniProtKB-UniRule"/>
</dbReference>
<dbReference type="CDD" id="cd02966">
    <property type="entry name" value="TlpA_like_family"/>
    <property type="match status" value="1"/>
</dbReference>
<dbReference type="FunFam" id="3.40.30.10:FF:000181">
    <property type="entry name" value="Thiol-disulfide oxidoreductase ResA"/>
    <property type="match status" value="1"/>
</dbReference>
<dbReference type="Gene3D" id="3.40.30.10">
    <property type="entry name" value="Glutaredoxin"/>
    <property type="match status" value="1"/>
</dbReference>
<dbReference type="HAMAP" id="MF_01319">
    <property type="entry name" value="ResA"/>
    <property type="match status" value="1"/>
</dbReference>
<dbReference type="InterPro" id="IPR000866">
    <property type="entry name" value="AhpC/TSA"/>
</dbReference>
<dbReference type="InterPro" id="IPR023555">
    <property type="entry name" value="Thiol-dS_OxRdtase_ResA"/>
</dbReference>
<dbReference type="InterPro" id="IPR036249">
    <property type="entry name" value="Thioredoxin-like_sf"/>
</dbReference>
<dbReference type="InterPro" id="IPR013766">
    <property type="entry name" value="Thioredoxin_domain"/>
</dbReference>
<dbReference type="InterPro" id="IPR050553">
    <property type="entry name" value="Thioredoxin_ResA/DsbE_sf"/>
</dbReference>
<dbReference type="NCBIfam" id="NF002854">
    <property type="entry name" value="PRK03147.1"/>
    <property type="match status" value="1"/>
</dbReference>
<dbReference type="PANTHER" id="PTHR42852">
    <property type="entry name" value="THIOL:DISULFIDE INTERCHANGE PROTEIN DSBE"/>
    <property type="match status" value="1"/>
</dbReference>
<dbReference type="PANTHER" id="PTHR42852:SF6">
    <property type="entry name" value="THIOL:DISULFIDE INTERCHANGE PROTEIN DSBE"/>
    <property type="match status" value="1"/>
</dbReference>
<dbReference type="Pfam" id="PF00578">
    <property type="entry name" value="AhpC-TSA"/>
    <property type="match status" value="1"/>
</dbReference>
<dbReference type="SUPFAM" id="SSF52833">
    <property type="entry name" value="Thioredoxin-like"/>
    <property type="match status" value="1"/>
</dbReference>
<dbReference type="PROSITE" id="PS51352">
    <property type="entry name" value="THIOREDOXIN_2"/>
    <property type="match status" value="1"/>
</dbReference>
<comment type="function">
    <text evidence="1">Thiol-disulfide oxidoreductase which is required in disulfide reduction during c-type cytochrome synthesis. May accept reducing equivalents from CcdA, leading to breakage of disulfide bonds in apocytochrome c; following this reduction heme can be covalently attached.</text>
</comment>
<comment type="pathway">
    <text evidence="1">Protein modification; cytochrome c assembly.</text>
</comment>
<comment type="subcellular location">
    <subcellularLocation>
        <location evidence="1">Cell membrane</location>
        <topology evidence="1">Single-pass type II membrane protein</topology>
    </subcellularLocation>
    <text evidence="1">The thioredoxin-like motif is exposed on the outside of the membrane.</text>
</comment>
<comment type="similarity">
    <text evidence="1">Belongs to the thioredoxin family. ResA subfamily.</text>
</comment>
<reference key="1">
    <citation type="journal article" date="2003" name="Nature">
        <title>The genome sequence of Bacillus anthracis Ames and comparison to closely related bacteria.</title>
        <authorList>
            <person name="Read T.D."/>
            <person name="Peterson S.N."/>
            <person name="Tourasse N.J."/>
            <person name="Baillie L.W."/>
            <person name="Paulsen I.T."/>
            <person name="Nelson K.E."/>
            <person name="Tettelin H."/>
            <person name="Fouts D.E."/>
            <person name="Eisen J.A."/>
            <person name="Gill S.R."/>
            <person name="Holtzapple E.K."/>
            <person name="Okstad O.A."/>
            <person name="Helgason E."/>
            <person name="Rilstone J."/>
            <person name="Wu M."/>
            <person name="Kolonay J.F."/>
            <person name="Beanan M.J."/>
            <person name="Dodson R.J."/>
            <person name="Brinkac L.M."/>
            <person name="Gwinn M.L."/>
            <person name="DeBoy R.T."/>
            <person name="Madpu R."/>
            <person name="Daugherty S.C."/>
            <person name="Durkin A.S."/>
            <person name="Haft D.H."/>
            <person name="Nelson W.C."/>
            <person name="Peterson J.D."/>
            <person name="Pop M."/>
            <person name="Khouri H.M."/>
            <person name="Radune D."/>
            <person name="Benton J.L."/>
            <person name="Mahamoud Y."/>
            <person name="Jiang L."/>
            <person name="Hance I.R."/>
            <person name="Weidman J.F."/>
            <person name="Berry K.J."/>
            <person name="Plaut R.D."/>
            <person name="Wolf A.M."/>
            <person name="Watkins K.L."/>
            <person name="Nierman W.C."/>
            <person name="Hazen A."/>
            <person name="Cline R.T."/>
            <person name="Redmond C."/>
            <person name="Thwaite J.E."/>
            <person name="White O."/>
            <person name="Salzberg S.L."/>
            <person name="Thomason B."/>
            <person name="Friedlander A.M."/>
            <person name="Koehler T.M."/>
            <person name="Hanna P.C."/>
            <person name="Kolstoe A.-B."/>
            <person name="Fraser C.M."/>
        </authorList>
    </citation>
    <scope>NUCLEOTIDE SEQUENCE [LARGE SCALE GENOMIC DNA]</scope>
    <source>
        <strain>Ames / isolate Porton</strain>
    </source>
</reference>
<reference key="2">
    <citation type="journal article" date="2009" name="J. Bacteriol.">
        <title>The complete genome sequence of Bacillus anthracis Ames 'Ancestor'.</title>
        <authorList>
            <person name="Ravel J."/>
            <person name="Jiang L."/>
            <person name="Stanley S.T."/>
            <person name="Wilson M.R."/>
            <person name="Decker R.S."/>
            <person name="Read T.D."/>
            <person name="Worsham P."/>
            <person name="Keim P.S."/>
            <person name="Salzberg S.L."/>
            <person name="Fraser-Liggett C.M."/>
            <person name="Rasko D.A."/>
        </authorList>
    </citation>
    <scope>NUCLEOTIDE SEQUENCE [LARGE SCALE GENOMIC DNA]</scope>
    <source>
        <strain>Ames ancestor</strain>
    </source>
</reference>
<reference key="3">
    <citation type="submission" date="2004-01" db="EMBL/GenBank/DDBJ databases">
        <title>Complete genome sequence of Bacillus anthracis Sterne.</title>
        <authorList>
            <person name="Brettin T.S."/>
            <person name="Bruce D."/>
            <person name="Challacombe J.F."/>
            <person name="Gilna P."/>
            <person name="Han C."/>
            <person name="Hill K."/>
            <person name="Hitchcock P."/>
            <person name="Jackson P."/>
            <person name="Keim P."/>
            <person name="Longmire J."/>
            <person name="Lucas S."/>
            <person name="Okinaka R."/>
            <person name="Richardson P."/>
            <person name="Rubin E."/>
            <person name="Tice H."/>
        </authorList>
    </citation>
    <scope>NUCLEOTIDE SEQUENCE [LARGE SCALE GENOMIC DNA]</scope>
    <source>
        <strain>Sterne</strain>
    </source>
</reference>
<accession>Q81SZ9</accession>
<accession>Q6I179</accession>
<accession>Q6KV30</accession>
<evidence type="ECO:0000255" key="1">
    <source>
        <dbReference type="HAMAP-Rule" id="MF_01319"/>
    </source>
</evidence>
<evidence type="ECO:0007829" key="2">
    <source>
        <dbReference type="PDB" id="4NMU"/>
    </source>
</evidence>
<keyword id="KW-0002">3D-structure</keyword>
<keyword id="KW-1003">Cell membrane</keyword>
<keyword id="KW-0201">Cytochrome c-type biogenesis</keyword>
<keyword id="KW-1015">Disulfide bond</keyword>
<keyword id="KW-0472">Membrane</keyword>
<keyword id="KW-0560">Oxidoreductase</keyword>
<keyword id="KW-0676">Redox-active center</keyword>
<keyword id="KW-1185">Reference proteome</keyword>
<keyword id="KW-0735">Signal-anchor</keyword>
<keyword id="KW-0812">Transmembrane</keyword>
<keyword id="KW-1133">Transmembrane helix</keyword>
<feature type="chain" id="PRO_0000120145" description="Thiol-disulfide oxidoreductase ResA">
    <location>
        <begin position="1"/>
        <end position="173"/>
    </location>
</feature>
<feature type="transmembrane region" description="Helical; Signal-anchor for type II membrane protein" evidence="1">
    <location>
        <begin position="10"/>
        <end position="29"/>
    </location>
</feature>
<feature type="domain" description="Thioredoxin" evidence="1">
    <location>
        <begin position="35"/>
        <end position="173"/>
    </location>
</feature>
<feature type="disulfide bond" description="Redox-active" evidence="1">
    <location>
        <begin position="73"/>
        <end position="76"/>
    </location>
</feature>
<feature type="helix" evidence="2">
    <location>
        <begin position="30"/>
        <end position="32"/>
    </location>
</feature>
<feature type="strand" evidence="2">
    <location>
        <begin position="45"/>
        <end position="48"/>
    </location>
</feature>
<feature type="strand" evidence="2">
    <location>
        <begin position="53"/>
        <end position="55"/>
    </location>
</feature>
<feature type="helix" evidence="2">
    <location>
        <begin position="56"/>
        <end position="59"/>
    </location>
</feature>
<feature type="strand" evidence="2">
    <location>
        <begin position="62"/>
        <end position="69"/>
    </location>
</feature>
<feature type="helix" evidence="2">
    <location>
        <begin position="74"/>
        <end position="92"/>
    </location>
</feature>
<feature type="strand" evidence="2">
    <location>
        <begin position="95"/>
        <end position="101"/>
    </location>
</feature>
<feature type="helix" evidence="2">
    <location>
        <begin position="106"/>
        <end position="116"/>
    </location>
</feature>
<feature type="strand" evidence="2">
    <location>
        <begin position="122"/>
        <end position="124"/>
    </location>
</feature>
<feature type="helix" evidence="2">
    <location>
        <begin position="126"/>
        <end position="128"/>
    </location>
</feature>
<feature type="helix" evidence="2">
    <location>
        <begin position="129"/>
        <end position="134"/>
    </location>
</feature>
<feature type="strand" evidence="2">
    <location>
        <begin position="138"/>
        <end position="145"/>
    </location>
</feature>
<feature type="strand" evidence="2">
    <location>
        <begin position="149"/>
        <end position="157"/>
    </location>
</feature>
<feature type="helix" evidence="2">
    <location>
        <begin position="161"/>
        <end position="170"/>
    </location>
</feature>
<name>RESA_BACAN</name>
<protein>
    <recommendedName>
        <fullName evidence="1">Thiol-disulfide oxidoreductase ResA</fullName>
    </recommendedName>
</protein>
<gene>
    <name evidence="1" type="primary">resA</name>
    <name type="ordered locus">BA_1494</name>
    <name type="ordered locus">GBAA_1494</name>
    <name type="ordered locus">BAS1383</name>
</gene>
<organism>
    <name type="scientific">Bacillus anthracis</name>
    <dbReference type="NCBI Taxonomy" id="1392"/>
    <lineage>
        <taxon>Bacteria</taxon>
        <taxon>Bacillati</taxon>
        <taxon>Bacillota</taxon>
        <taxon>Bacilli</taxon>
        <taxon>Bacillales</taxon>
        <taxon>Bacillaceae</taxon>
        <taxon>Bacillus</taxon>
        <taxon>Bacillus cereus group</taxon>
    </lineage>
</organism>
<sequence>MKKNRLLFRVIILLILSGAVGFTLYQGFFADKEKMQIGKEAPNFVVTDLEGKKIELKDLKGKGVFLNFWGTWCKPCEKEMPYMNELYPKYKEKGVEIIALDADETDIAVKNFVNQYGLKFPVAIDKGQKIIGTYGVGPLPTSFLIDKDGKVVEQIIGEQTKEQLEGYLKKITP</sequence>
<proteinExistence type="evidence at protein level"/>